<proteinExistence type="inferred from homology"/>
<accession>O27048</accession>
<feature type="chain" id="PRO_0000144859" description="Putative HTH-type transcriptional regulatory protein MTH_967">
    <location>
        <begin position="1"/>
        <end position="311"/>
    </location>
</feature>
<feature type="domain" description="HTH cro/C1-type" evidence="1">
    <location>
        <begin position="134"/>
        <end position="192"/>
    </location>
</feature>
<feature type="DNA-binding region" description="H-T-H motif" evidence="1">
    <location>
        <begin position="145"/>
        <end position="164"/>
    </location>
</feature>
<sequence length="311" mass="35357">MDKSIKREHVLREIHELLASNGFETSHIYERSCFDLMARRKLLLLLLKVLVNIDGINSLQAHEIRTLAHTFLASPIIVGVRSKTEPLKEDVVYERHGIPAVAPETFRNMVADGEYPEIIADRGGYYVHIDGKTLREVREEYNLSLKDLADLAHVSRKTIYKYENGLARASAETAMILEEILNIRITLSIDIFSVPDRDEIEIKPSGRLADIGFGMIETHKTPFDAVAKEIKFDNTVITNLEKERDSRTLRRMAVPLKDLSLVSGSESVFIIDNPRINENIEGIPVIKSWEIGEMESSREFLKVIAERKTCS</sequence>
<reference key="1">
    <citation type="journal article" date="1997" name="J. Bacteriol.">
        <title>Complete genome sequence of Methanobacterium thermoautotrophicum deltaH: functional analysis and comparative genomics.</title>
        <authorList>
            <person name="Smith D.R."/>
            <person name="Doucette-Stamm L.A."/>
            <person name="Deloughery C."/>
            <person name="Lee H.-M."/>
            <person name="Dubois J."/>
            <person name="Aldredge T."/>
            <person name="Bashirzadeh R."/>
            <person name="Blakely D."/>
            <person name="Cook R."/>
            <person name="Gilbert K."/>
            <person name="Harrison D."/>
            <person name="Hoang L."/>
            <person name="Keagle P."/>
            <person name="Lumm W."/>
            <person name="Pothier B."/>
            <person name="Qiu D."/>
            <person name="Spadafora R."/>
            <person name="Vicare R."/>
            <person name="Wang Y."/>
            <person name="Wierzbowski J."/>
            <person name="Gibson R."/>
            <person name="Jiwani N."/>
            <person name="Caruso A."/>
            <person name="Bush D."/>
            <person name="Safer H."/>
            <person name="Patwell D."/>
            <person name="Prabhakar S."/>
            <person name="McDougall S."/>
            <person name="Shimer G."/>
            <person name="Goyal A."/>
            <person name="Pietrovski S."/>
            <person name="Church G.M."/>
            <person name="Daniels C.J."/>
            <person name="Mao J.-I."/>
            <person name="Rice P."/>
            <person name="Noelling J."/>
            <person name="Reeve J.N."/>
        </authorList>
    </citation>
    <scope>NUCLEOTIDE SEQUENCE [LARGE SCALE GENOMIC DNA]</scope>
    <source>
        <strain>ATCC 29096 / DSM 1053 / JCM 10044 / NBRC 100330 / Delta H</strain>
    </source>
</reference>
<keyword id="KW-0238">DNA-binding</keyword>
<keyword id="KW-1185">Reference proteome</keyword>
<keyword id="KW-0804">Transcription</keyword>
<keyword id="KW-0805">Transcription regulation</keyword>
<organism>
    <name type="scientific">Methanothermobacter thermautotrophicus (strain ATCC 29096 / DSM 1053 / JCM 10044 / NBRC 100330 / Delta H)</name>
    <name type="common">Methanobacterium thermoautotrophicum</name>
    <dbReference type="NCBI Taxonomy" id="187420"/>
    <lineage>
        <taxon>Archaea</taxon>
        <taxon>Methanobacteriati</taxon>
        <taxon>Methanobacteriota</taxon>
        <taxon>Methanomada group</taxon>
        <taxon>Methanobacteria</taxon>
        <taxon>Methanobacteriales</taxon>
        <taxon>Methanobacteriaceae</taxon>
        <taxon>Methanothermobacter</taxon>
    </lineage>
</organism>
<dbReference type="EMBL" id="AE000666">
    <property type="protein sequence ID" value="AAB85463.1"/>
    <property type="molecule type" value="Genomic_DNA"/>
</dbReference>
<dbReference type="PIR" id="D69229">
    <property type="entry name" value="D69229"/>
</dbReference>
<dbReference type="RefSeq" id="WP_010876598.1">
    <property type="nucleotide sequence ID" value="NC_000916.1"/>
</dbReference>
<dbReference type="SMR" id="O27048"/>
<dbReference type="FunCoup" id="O27048">
    <property type="interactions" value="4"/>
</dbReference>
<dbReference type="STRING" id="187420.MTH_967"/>
<dbReference type="PaxDb" id="187420-MTH_967"/>
<dbReference type="EnsemblBacteria" id="AAB85463">
    <property type="protein sequence ID" value="AAB85463"/>
    <property type="gene ID" value="MTH_967"/>
</dbReference>
<dbReference type="GeneID" id="1471375"/>
<dbReference type="KEGG" id="mth:MTH_967"/>
<dbReference type="PATRIC" id="fig|187420.15.peg.950"/>
<dbReference type="HOGENOM" id="CLU_075726_0_0_2"/>
<dbReference type="InParanoid" id="O27048"/>
<dbReference type="Proteomes" id="UP000005223">
    <property type="component" value="Chromosome"/>
</dbReference>
<dbReference type="GO" id="GO:0003677">
    <property type="term" value="F:DNA binding"/>
    <property type="evidence" value="ECO:0007669"/>
    <property type="project" value="UniProtKB-KW"/>
</dbReference>
<dbReference type="GO" id="GO:0003700">
    <property type="term" value="F:DNA-binding transcription factor activity"/>
    <property type="evidence" value="ECO:0007669"/>
    <property type="project" value="UniProtKB-UniRule"/>
</dbReference>
<dbReference type="CDD" id="cd00093">
    <property type="entry name" value="HTH_XRE"/>
    <property type="match status" value="1"/>
</dbReference>
<dbReference type="Gene3D" id="1.10.260.40">
    <property type="entry name" value="lambda repressor-like DNA-binding domains"/>
    <property type="match status" value="1"/>
</dbReference>
<dbReference type="HAMAP" id="MF_00584">
    <property type="entry name" value="HTH_type_cro_C1"/>
    <property type="match status" value="1"/>
</dbReference>
<dbReference type="InterPro" id="IPR020886">
    <property type="entry name" value="Arc_TR_HTH"/>
</dbReference>
<dbReference type="InterPro" id="IPR001387">
    <property type="entry name" value="Cro/C1-type_HTH"/>
</dbReference>
<dbReference type="InterPro" id="IPR010982">
    <property type="entry name" value="Lambda_DNA-bd_dom_sf"/>
</dbReference>
<dbReference type="NCBIfam" id="NF003162">
    <property type="entry name" value="PRK04140.1"/>
    <property type="match status" value="1"/>
</dbReference>
<dbReference type="Pfam" id="PF01381">
    <property type="entry name" value="HTH_3"/>
    <property type="match status" value="1"/>
</dbReference>
<dbReference type="SMART" id="SM00530">
    <property type="entry name" value="HTH_XRE"/>
    <property type="match status" value="1"/>
</dbReference>
<dbReference type="SUPFAM" id="SSF47413">
    <property type="entry name" value="lambda repressor-like DNA-binding domains"/>
    <property type="match status" value="1"/>
</dbReference>
<dbReference type="PROSITE" id="PS50943">
    <property type="entry name" value="HTH_CROC1"/>
    <property type="match status" value="1"/>
</dbReference>
<gene>
    <name type="ordered locus">MTH_967</name>
</gene>
<protein>
    <recommendedName>
        <fullName evidence="1">Putative HTH-type transcriptional regulatory protein MTH_967</fullName>
    </recommendedName>
</protein>
<name>Y967_METTH</name>
<evidence type="ECO:0000255" key="1">
    <source>
        <dbReference type="HAMAP-Rule" id="MF_00584"/>
    </source>
</evidence>